<protein>
    <recommendedName>
        <fullName evidence="1">Thiazole synthase</fullName>
        <ecNumber evidence="1">2.8.1.10</ecNumber>
    </recommendedName>
</protein>
<feature type="chain" id="PRO_1000124590" description="Thiazole synthase">
    <location>
        <begin position="1"/>
        <end position="261"/>
    </location>
</feature>
<feature type="active site" description="Schiff-base intermediate with DXP" evidence="1">
    <location>
        <position position="102"/>
    </location>
</feature>
<feature type="binding site" evidence="1">
    <location>
        <position position="163"/>
    </location>
    <ligand>
        <name>1-deoxy-D-xylulose 5-phosphate</name>
        <dbReference type="ChEBI" id="CHEBI:57792"/>
    </ligand>
</feature>
<feature type="binding site" evidence="1">
    <location>
        <begin position="189"/>
        <end position="190"/>
    </location>
    <ligand>
        <name>1-deoxy-D-xylulose 5-phosphate</name>
        <dbReference type="ChEBI" id="CHEBI:57792"/>
    </ligand>
</feature>
<feature type="binding site" evidence="1">
    <location>
        <begin position="211"/>
        <end position="212"/>
    </location>
    <ligand>
        <name>1-deoxy-D-xylulose 5-phosphate</name>
        <dbReference type="ChEBI" id="CHEBI:57792"/>
    </ligand>
</feature>
<organism>
    <name type="scientific">Acinetobacter baumannii (strain ACICU)</name>
    <dbReference type="NCBI Taxonomy" id="405416"/>
    <lineage>
        <taxon>Bacteria</taxon>
        <taxon>Pseudomonadati</taxon>
        <taxon>Pseudomonadota</taxon>
        <taxon>Gammaproteobacteria</taxon>
        <taxon>Moraxellales</taxon>
        <taxon>Moraxellaceae</taxon>
        <taxon>Acinetobacter</taxon>
        <taxon>Acinetobacter calcoaceticus/baumannii complex</taxon>
    </lineage>
</organism>
<gene>
    <name evidence="1" type="primary">thiG</name>
    <name type="ordered locus">ACICU_02467</name>
</gene>
<evidence type="ECO:0000255" key="1">
    <source>
        <dbReference type="HAMAP-Rule" id="MF_00443"/>
    </source>
</evidence>
<sequence length="261" mass="27763">MQDTPLIIGSRSFQSRLLVGTGKYKDLNETDLAIQASGAEIVTVAIRRVNIGQNPDQPNLLSVIPPEKYTILPNTAGCFDADSAVRTCMLARELLDGHNLVKLEVLGDEKTLYPNVTETLKAARTLIDDGFEIMVYTSDDPIIAQELESMGCVAIMPLGSLIGSGLGILNPHTISIIKENAKVPVLVDAGVGTASDAAIAMELGCDGVLMNTAIAAAQNPILMASAMKKAVEAGREAFLAGRMPRKRMANASSPETGYFFK</sequence>
<accession>B2HUU9</accession>
<reference key="1">
    <citation type="journal article" date="2008" name="Antimicrob. Agents Chemother.">
        <title>Whole-genome pyrosequencing of an epidemic multidrug-resistant Acinetobacter baumannii strain belonging to the European clone II group.</title>
        <authorList>
            <person name="Iacono M."/>
            <person name="Villa L."/>
            <person name="Fortini D."/>
            <person name="Bordoni R."/>
            <person name="Imperi F."/>
            <person name="Bonnal R.J."/>
            <person name="Sicheritz-Ponten T."/>
            <person name="De Bellis G."/>
            <person name="Visca P."/>
            <person name="Cassone A."/>
            <person name="Carattoli A."/>
        </authorList>
    </citation>
    <scope>NUCLEOTIDE SEQUENCE [LARGE SCALE GENOMIC DNA]</scope>
    <source>
        <strain>ACICU</strain>
    </source>
</reference>
<keyword id="KW-0963">Cytoplasm</keyword>
<keyword id="KW-0704">Schiff base</keyword>
<keyword id="KW-0784">Thiamine biosynthesis</keyword>
<keyword id="KW-0808">Transferase</keyword>
<dbReference type="EC" id="2.8.1.10" evidence="1"/>
<dbReference type="EMBL" id="CP000863">
    <property type="protein sequence ID" value="ACC57779.1"/>
    <property type="molecule type" value="Genomic_DNA"/>
</dbReference>
<dbReference type="RefSeq" id="WP_001154366.1">
    <property type="nucleotide sequence ID" value="NZ_CP031380.1"/>
</dbReference>
<dbReference type="SMR" id="B2HUU9"/>
<dbReference type="KEGG" id="abc:ACICU_02467"/>
<dbReference type="HOGENOM" id="CLU_062233_1_1_6"/>
<dbReference type="UniPathway" id="UPA00060"/>
<dbReference type="Proteomes" id="UP000008839">
    <property type="component" value="Chromosome"/>
</dbReference>
<dbReference type="GO" id="GO:0005737">
    <property type="term" value="C:cytoplasm"/>
    <property type="evidence" value="ECO:0007669"/>
    <property type="project" value="UniProtKB-SubCell"/>
</dbReference>
<dbReference type="GO" id="GO:1990107">
    <property type="term" value="F:thiazole synthase activity"/>
    <property type="evidence" value="ECO:0007669"/>
    <property type="project" value="UniProtKB-EC"/>
</dbReference>
<dbReference type="GO" id="GO:0009229">
    <property type="term" value="P:thiamine diphosphate biosynthetic process"/>
    <property type="evidence" value="ECO:0007669"/>
    <property type="project" value="UniProtKB-UniRule"/>
</dbReference>
<dbReference type="CDD" id="cd04728">
    <property type="entry name" value="ThiG"/>
    <property type="match status" value="1"/>
</dbReference>
<dbReference type="Gene3D" id="3.20.20.70">
    <property type="entry name" value="Aldolase class I"/>
    <property type="match status" value="1"/>
</dbReference>
<dbReference type="HAMAP" id="MF_00443">
    <property type="entry name" value="ThiG"/>
    <property type="match status" value="1"/>
</dbReference>
<dbReference type="InterPro" id="IPR013785">
    <property type="entry name" value="Aldolase_TIM"/>
</dbReference>
<dbReference type="InterPro" id="IPR033983">
    <property type="entry name" value="Thiazole_synthase_ThiG"/>
</dbReference>
<dbReference type="InterPro" id="IPR008867">
    <property type="entry name" value="ThiG"/>
</dbReference>
<dbReference type="PANTHER" id="PTHR34266">
    <property type="entry name" value="THIAZOLE SYNTHASE"/>
    <property type="match status" value="1"/>
</dbReference>
<dbReference type="PANTHER" id="PTHR34266:SF2">
    <property type="entry name" value="THIAZOLE SYNTHASE"/>
    <property type="match status" value="1"/>
</dbReference>
<dbReference type="Pfam" id="PF05690">
    <property type="entry name" value="ThiG"/>
    <property type="match status" value="1"/>
</dbReference>
<dbReference type="SUPFAM" id="SSF110399">
    <property type="entry name" value="ThiG-like"/>
    <property type="match status" value="1"/>
</dbReference>
<comment type="function">
    <text evidence="1">Catalyzes the rearrangement of 1-deoxy-D-xylulose 5-phosphate (DXP) to produce the thiazole phosphate moiety of thiamine. Sulfur is provided by the thiocarboxylate moiety of the carrier protein ThiS. In vitro, sulfur can be provided by H(2)S.</text>
</comment>
<comment type="catalytic activity">
    <reaction evidence="1">
        <text>[ThiS sulfur-carrier protein]-C-terminal-Gly-aminoethanethioate + 2-iminoacetate + 1-deoxy-D-xylulose 5-phosphate = [ThiS sulfur-carrier protein]-C-terminal Gly-Gly + 2-[(2R,5Z)-2-carboxy-4-methylthiazol-5(2H)-ylidene]ethyl phosphate + 2 H2O + H(+)</text>
        <dbReference type="Rhea" id="RHEA:26297"/>
        <dbReference type="Rhea" id="RHEA-COMP:12909"/>
        <dbReference type="Rhea" id="RHEA-COMP:19908"/>
        <dbReference type="ChEBI" id="CHEBI:15377"/>
        <dbReference type="ChEBI" id="CHEBI:15378"/>
        <dbReference type="ChEBI" id="CHEBI:57792"/>
        <dbReference type="ChEBI" id="CHEBI:62899"/>
        <dbReference type="ChEBI" id="CHEBI:77846"/>
        <dbReference type="ChEBI" id="CHEBI:90778"/>
        <dbReference type="ChEBI" id="CHEBI:232372"/>
        <dbReference type="EC" id="2.8.1.10"/>
    </reaction>
</comment>
<comment type="pathway">
    <text evidence="1">Cofactor biosynthesis; thiamine diphosphate biosynthesis.</text>
</comment>
<comment type="subunit">
    <text evidence="1">Homotetramer. Forms heterodimers with either ThiH or ThiS.</text>
</comment>
<comment type="subcellular location">
    <subcellularLocation>
        <location evidence="1">Cytoplasm</location>
    </subcellularLocation>
</comment>
<comment type="similarity">
    <text evidence="1">Belongs to the ThiG family.</text>
</comment>
<proteinExistence type="inferred from homology"/>
<name>THIG_ACIBC</name>